<keyword id="KW-0393">Immunoglobulin domain</keyword>
<keyword id="KW-0472">Membrane</keyword>
<keyword id="KW-0675">Receptor</keyword>
<keyword id="KW-1185">Reference proteome</keyword>
<keyword id="KW-0812">Transmembrane</keyword>
<keyword id="KW-1133">Transmembrane helix</keyword>
<organism>
    <name type="scientific">Mus musculus</name>
    <name type="common">Mouse</name>
    <dbReference type="NCBI Taxonomy" id="10090"/>
    <lineage>
        <taxon>Eukaryota</taxon>
        <taxon>Metazoa</taxon>
        <taxon>Chordata</taxon>
        <taxon>Craniata</taxon>
        <taxon>Vertebrata</taxon>
        <taxon>Euteleostomi</taxon>
        <taxon>Mammalia</taxon>
        <taxon>Eutheria</taxon>
        <taxon>Euarchontoglires</taxon>
        <taxon>Glires</taxon>
        <taxon>Rodentia</taxon>
        <taxon>Myomorpha</taxon>
        <taxon>Muroidea</taxon>
        <taxon>Muridae</taxon>
        <taxon>Murinae</taxon>
        <taxon>Mus</taxon>
        <taxon>Mus</taxon>
    </lineage>
</organism>
<name>TCC4_MOUSE</name>
<comment type="subcellular location">
    <subcellularLocation>
        <location evidence="2">Membrane</location>
        <topology evidence="2">Single-pass membrane protein</topology>
    </subcellularLocation>
</comment>
<sequence>DKRTDSDFSPKPTIFLPSAAETNLHKAGTYLCLLEKFFPKVIRVYWKEKDGEKILESQEGNTIKTNDRYMKFSWLTVTEDSMAKEHSCIVKHENNKRGVDQEILFPPIGKAFTTINVNPRDSVLRHENVNNATDLEDCMKGRKDMLQLQVTTTYAFYTYLILFFKSMVHLAFVVFCLFRRAAMSCDDQRS</sequence>
<feature type="chain" id="PRO_0000184534" description="T-cell receptor gamma chain C region 5/10-13">
    <location>
        <begin position="1" status="less than"/>
        <end position="190"/>
    </location>
</feature>
<feature type="transmembrane region" description="Helical" evidence="1">
    <location>
        <begin position="158"/>
        <end position="178"/>
    </location>
</feature>
<feature type="topological domain" description="Cytoplasmic" evidence="1">
    <location>
        <begin position="179"/>
        <end position="190"/>
    </location>
</feature>
<feature type="region of interest" description="C region">
    <location>
        <begin position="1"/>
        <end position="157"/>
    </location>
</feature>
<feature type="non-terminal residue">
    <location>
        <position position="1"/>
    </location>
</feature>
<reference key="1">
    <citation type="journal article" date="1986" name="J. Exp. Med.">
        <title>T cell-specific gamma genes in C57BL/10 mice. Sequence and expression of new constant and variable region genes.</title>
        <authorList>
            <person name="Iwamoto A."/>
            <person name="Rupp F."/>
            <person name="Ohashi P.S."/>
            <person name="Walker C.L."/>
            <person name="Pircher H."/>
            <person name="Joho R."/>
            <person name="Hengartner H."/>
            <person name="Mak T.W."/>
        </authorList>
    </citation>
    <scope>NUCLEOTIDE SEQUENCE</scope>
    <source>
        <strain>C57BL/10</strain>
    </source>
</reference>
<accession>P06335</accession>
<protein>
    <recommendedName>
        <fullName>T-cell receptor gamma chain C region 5/10-13</fullName>
    </recommendedName>
</protein>
<proteinExistence type="predicted"/>
<evidence type="ECO:0000255" key="1"/>
<evidence type="ECO:0000305" key="2"/>
<dbReference type="PIR" id="A02140">
    <property type="entry name" value="RWMS8C"/>
</dbReference>
<dbReference type="SMR" id="P06335"/>
<dbReference type="FunCoup" id="P06335">
    <property type="interactions" value="188"/>
</dbReference>
<dbReference type="UCSC" id="uc007poz.1">
    <property type="organism name" value="mouse"/>
</dbReference>
<dbReference type="InParanoid" id="P06335"/>
<dbReference type="Proteomes" id="UP000000589">
    <property type="component" value="Unplaced"/>
</dbReference>
<dbReference type="RNAct" id="P06335">
    <property type="molecule type" value="protein"/>
</dbReference>
<dbReference type="GO" id="GO:0009897">
    <property type="term" value="C:external side of plasma membrane"/>
    <property type="evidence" value="ECO:0000318"/>
    <property type="project" value="GO_Central"/>
</dbReference>
<dbReference type="CDD" id="cd07697">
    <property type="entry name" value="IgC1_TCR_gamma"/>
    <property type="match status" value="1"/>
</dbReference>
<dbReference type="FunFam" id="2.60.40.10:FF:001083">
    <property type="entry name" value="T cell receptor gamma constant 2"/>
    <property type="match status" value="1"/>
</dbReference>
<dbReference type="Gene3D" id="2.60.40.10">
    <property type="entry name" value="Immunoglobulins"/>
    <property type="match status" value="1"/>
</dbReference>
<dbReference type="InterPro" id="IPR007110">
    <property type="entry name" value="Ig-like_dom"/>
</dbReference>
<dbReference type="InterPro" id="IPR036179">
    <property type="entry name" value="Ig-like_dom_sf"/>
</dbReference>
<dbReference type="InterPro" id="IPR013783">
    <property type="entry name" value="Ig-like_fold"/>
</dbReference>
<dbReference type="InterPro" id="IPR003597">
    <property type="entry name" value="Ig_C1-set"/>
</dbReference>
<dbReference type="InterPro" id="IPR051117">
    <property type="entry name" value="TRG_var/const_region"/>
</dbReference>
<dbReference type="PANTHER" id="PTHR19256">
    <property type="entry name" value="T-CELL RECEPTOR GAMMA CHAIN"/>
    <property type="match status" value="1"/>
</dbReference>
<dbReference type="PANTHER" id="PTHR19256:SF61">
    <property type="entry name" value="T-CELL RECEPTOR GAMMA CHAIN C REGION 5_10-13"/>
    <property type="match status" value="1"/>
</dbReference>
<dbReference type="Pfam" id="PF07654">
    <property type="entry name" value="C1-set"/>
    <property type="match status" value="1"/>
</dbReference>
<dbReference type="SMART" id="SM00407">
    <property type="entry name" value="IGc1"/>
    <property type="match status" value="1"/>
</dbReference>
<dbReference type="SUPFAM" id="SSF48726">
    <property type="entry name" value="Immunoglobulin"/>
    <property type="match status" value="1"/>
</dbReference>
<dbReference type="PROSITE" id="PS50835">
    <property type="entry name" value="IG_LIKE"/>
    <property type="match status" value="1"/>
</dbReference>